<comment type="function">
    <text evidence="1 4 5">Component of the ribosome, a large ribonucleoprotein complex responsible for the synthesis of proteins in the cell. The small ribosomal subunit (SSU) binds messenger RNAs (mRNAs) and translates the encoded message by selecting cognate aminoacyl-transfer RNA (tRNA) molecules. The large subunit (LSU) contains the ribosomal catalytic site termed the peptidyl transferase center (PTC), which catalyzes the formation of peptide bonds, thereby polymerizing the amino acids delivered by tRNAs into a polypeptide chain. The nascent polypeptides leave the ribosome through a tunnel in the LSU and interact with protein factors that function in enzymatic processing, targeting, and the membrane insertion of nascent chains at the exit of the ribosomal tunnel. Seems involved in the regulation of cell proliferation (PubMed:19392710). Essential in leaf polarity establishment, probably having a role for translation in leaf dorsoventral patterning to specify leaf adaxial identity (PubMed:18305007).</text>
</comment>
<comment type="subunit">
    <text evidence="1">Component of the large ribosomal subunit (LSU).</text>
</comment>
<comment type="subcellular location">
    <subcellularLocation>
        <location evidence="2">Cytoplasm</location>
    </subcellularLocation>
    <subcellularLocation>
        <location evidence="2">Nucleus</location>
    </subcellularLocation>
    <subcellularLocation>
        <location evidence="2">Nucleus</location>
        <location evidence="2">Nucleolus</location>
    </subcellularLocation>
    <subcellularLocation>
        <location evidence="2">Nucleus</location>
        <location evidence="2">Nucleoplasm</location>
    </subcellularLocation>
</comment>
<comment type="disruption phenotype">
    <text evidence="4 5">Moderate reduction in cell number (PubMed:19392710). Abnormal leaf patterning, with the abaxial mesophyll features appearing in the adaxial mesophyll domain (PubMed:18305007). Double mutants oli2 oli7 have further reduced cell number but exhibit also excessive postmitotic cell enlargement in leaves (compensation phenotype) (PubMed:19392710). Plant missing both OLI7 and GIF1/AN3 have a strong compensation phenotype (PubMed:19392710).</text>
</comment>
<comment type="similarity">
    <text evidence="9">Belongs to the universal ribosomal protein uL18 family.</text>
</comment>
<accession>P49227</accession>
<accession>Q41921</accession>
<name>RL52_ARATH</name>
<evidence type="ECO:0000250" key="1">
    <source>
        <dbReference type="UniProtKB" id="P26321"/>
    </source>
</evidence>
<evidence type="ECO:0000250" key="2">
    <source>
        <dbReference type="UniProtKB" id="Q8LBI1"/>
    </source>
</evidence>
<evidence type="ECO:0000256" key="3">
    <source>
        <dbReference type="SAM" id="MobiDB-lite"/>
    </source>
</evidence>
<evidence type="ECO:0000269" key="4">
    <source>
    </source>
</evidence>
<evidence type="ECO:0000269" key="5">
    <source>
    </source>
</evidence>
<evidence type="ECO:0000303" key="6">
    <source>
    </source>
</evidence>
<evidence type="ECO:0000303" key="7">
    <source>
    </source>
</evidence>
<evidence type="ECO:0000303" key="8">
    <source>
    </source>
</evidence>
<evidence type="ECO:0000305" key="9"/>
<evidence type="ECO:0000312" key="10">
    <source>
        <dbReference type="Araport" id="AT5G39740"/>
    </source>
</evidence>
<evidence type="ECO:0000312" key="11">
    <source>
        <dbReference type="EMBL" id="BAB11380.1"/>
    </source>
</evidence>
<keyword id="KW-0963">Cytoplasm</keyword>
<keyword id="KW-0539">Nucleus</keyword>
<keyword id="KW-1185">Reference proteome</keyword>
<keyword id="KW-0687">Ribonucleoprotein</keyword>
<keyword id="KW-0689">Ribosomal protein</keyword>
<keyword id="KW-0694">RNA-binding</keyword>
<keyword id="KW-0699">rRNA-binding</keyword>
<gene>
    <name evidence="6" type="primary">RPL5B</name>
    <name evidence="7" type="synonym">OLI7</name>
    <name evidence="10" type="ordered locus">At5g39740</name>
    <name evidence="11" type="ORF">MKM21.30</name>
    <name evidence="11" type="ORF">MKM21.5</name>
</gene>
<protein>
    <recommendedName>
        <fullName evidence="8">Large ribosomal subunit protein uL18y</fullName>
    </recommendedName>
    <alternativeName>
        <fullName evidence="6">60S ribosomal protein L5-2</fullName>
        <shortName evidence="6">Ribosomal protein L5 B</shortName>
    </alternativeName>
    <alternativeName>
        <fullName evidence="7">Protein OLIGOCELLULA 7</fullName>
    </alternativeName>
</protein>
<dbReference type="EMBL" id="AB016876">
    <property type="protein sequence ID" value="BAB11380.1"/>
    <property type="molecule type" value="Genomic_DNA"/>
</dbReference>
<dbReference type="EMBL" id="CP002688">
    <property type="protein sequence ID" value="AED94469.1"/>
    <property type="molecule type" value="Genomic_DNA"/>
</dbReference>
<dbReference type="EMBL" id="CP002688">
    <property type="protein sequence ID" value="AED94470.1"/>
    <property type="molecule type" value="Genomic_DNA"/>
</dbReference>
<dbReference type="EMBL" id="AY079020">
    <property type="protein sequence ID" value="AAL84975.1"/>
    <property type="molecule type" value="mRNA"/>
</dbReference>
<dbReference type="EMBL" id="AY093123">
    <property type="protein sequence ID" value="AAM13122.1"/>
    <property type="molecule type" value="mRNA"/>
</dbReference>
<dbReference type="EMBL" id="BT008706">
    <property type="protein sequence ID" value="AAP42719.1"/>
    <property type="molecule type" value="mRNA"/>
</dbReference>
<dbReference type="EMBL" id="Z17696">
    <property type="protein sequence ID" value="CAA79040.1"/>
    <property type="molecule type" value="mRNA"/>
</dbReference>
<dbReference type="EMBL" id="Z17697">
    <property type="protein sequence ID" value="CAA79041.1"/>
    <property type="molecule type" value="mRNA"/>
</dbReference>
<dbReference type="RefSeq" id="NP_001190439.1">
    <property type="nucleotide sequence ID" value="NM_001203510.1"/>
</dbReference>
<dbReference type="RefSeq" id="NP_198790.1">
    <property type="nucleotide sequence ID" value="NM_123336.6"/>
</dbReference>
<dbReference type="SMR" id="P49227"/>
<dbReference type="BioGRID" id="19221">
    <property type="interactions" value="103"/>
</dbReference>
<dbReference type="FunCoup" id="P49227">
    <property type="interactions" value="3747"/>
</dbReference>
<dbReference type="STRING" id="3702.P49227"/>
<dbReference type="iPTMnet" id="P49227"/>
<dbReference type="PaxDb" id="3702-AT5G39740.2"/>
<dbReference type="ProteomicsDB" id="236507"/>
<dbReference type="EnsemblPlants" id="AT5G39740.1">
    <property type="protein sequence ID" value="AT5G39740.1"/>
    <property type="gene ID" value="AT5G39740"/>
</dbReference>
<dbReference type="EnsemblPlants" id="AT5G39740.2">
    <property type="protein sequence ID" value="AT5G39740.2"/>
    <property type="gene ID" value="AT5G39740"/>
</dbReference>
<dbReference type="GeneID" id="833970"/>
<dbReference type="Gramene" id="AT5G39740.1">
    <property type="protein sequence ID" value="AT5G39740.1"/>
    <property type="gene ID" value="AT5G39740"/>
</dbReference>
<dbReference type="Gramene" id="AT5G39740.2">
    <property type="protein sequence ID" value="AT5G39740.2"/>
    <property type="gene ID" value="AT5G39740"/>
</dbReference>
<dbReference type="KEGG" id="ath:AT5G39740"/>
<dbReference type="Araport" id="AT5G39740"/>
<dbReference type="TAIR" id="AT5G39740">
    <property type="gene designation" value="RPL5B"/>
</dbReference>
<dbReference type="eggNOG" id="KOG0875">
    <property type="taxonomic scope" value="Eukaryota"/>
</dbReference>
<dbReference type="HOGENOM" id="CLU_056222_1_0_1"/>
<dbReference type="InParanoid" id="P49227"/>
<dbReference type="OMA" id="CQIASAH"/>
<dbReference type="OrthoDB" id="1066555at2759"/>
<dbReference type="PhylomeDB" id="P49227"/>
<dbReference type="CD-CODE" id="4299E36E">
    <property type="entry name" value="Nucleolus"/>
</dbReference>
<dbReference type="PRO" id="PR:P49227"/>
<dbReference type="Proteomes" id="UP000006548">
    <property type="component" value="Chromosome 5"/>
</dbReference>
<dbReference type="ExpressionAtlas" id="P49227">
    <property type="expression patterns" value="baseline and differential"/>
</dbReference>
<dbReference type="GO" id="GO:0022625">
    <property type="term" value="C:cytosolic large ribosomal subunit"/>
    <property type="evidence" value="ECO:0007005"/>
    <property type="project" value="TAIR"/>
</dbReference>
<dbReference type="GO" id="GO:0022626">
    <property type="term" value="C:cytosolic ribosome"/>
    <property type="evidence" value="ECO:0007005"/>
    <property type="project" value="TAIR"/>
</dbReference>
<dbReference type="GO" id="GO:0005730">
    <property type="term" value="C:nucleolus"/>
    <property type="evidence" value="ECO:0007005"/>
    <property type="project" value="TAIR"/>
</dbReference>
<dbReference type="GO" id="GO:0005654">
    <property type="term" value="C:nucleoplasm"/>
    <property type="evidence" value="ECO:0007669"/>
    <property type="project" value="UniProtKB-SubCell"/>
</dbReference>
<dbReference type="GO" id="GO:0000325">
    <property type="term" value="C:plant-type vacuole"/>
    <property type="evidence" value="ECO:0007005"/>
    <property type="project" value="TAIR"/>
</dbReference>
<dbReference type="GO" id="GO:0009536">
    <property type="term" value="C:plastid"/>
    <property type="evidence" value="ECO:0007005"/>
    <property type="project" value="TAIR"/>
</dbReference>
<dbReference type="GO" id="GO:0008097">
    <property type="term" value="F:5S rRNA binding"/>
    <property type="evidence" value="ECO:0007669"/>
    <property type="project" value="InterPro"/>
</dbReference>
<dbReference type="GO" id="GO:0003729">
    <property type="term" value="F:mRNA binding"/>
    <property type="evidence" value="ECO:0000314"/>
    <property type="project" value="TAIR"/>
</dbReference>
<dbReference type="GO" id="GO:0003735">
    <property type="term" value="F:structural constituent of ribosome"/>
    <property type="evidence" value="ECO:0000314"/>
    <property type="project" value="CAFA"/>
</dbReference>
<dbReference type="GO" id="GO:0009955">
    <property type="term" value="P:adaxial/abaxial pattern specification"/>
    <property type="evidence" value="ECO:0000315"/>
    <property type="project" value="UniProtKB"/>
</dbReference>
<dbReference type="GO" id="GO:0051301">
    <property type="term" value="P:cell division"/>
    <property type="evidence" value="ECO:0000315"/>
    <property type="project" value="TAIR"/>
</dbReference>
<dbReference type="GO" id="GO:0009965">
    <property type="term" value="P:leaf morphogenesis"/>
    <property type="evidence" value="ECO:0000315"/>
    <property type="project" value="UniProtKB"/>
</dbReference>
<dbReference type="GO" id="GO:0006412">
    <property type="term" value="P:translation"/>
    <property type="evidence" value="ECO:0007669"/>
    <property type="project" value="InterPro"/>
</dbReference>
<dbReference type="CDD" id="cd00432">
    <property type="entry name" value="Ribosomal_L18_L5e"/>
    <property type="match status" value="1"/>
</dbReference>
<dbReference type="FunFam" id="3.30.420.100:FF:000002">
    <property type="entry name" value="60S ribosomal protein L5"/>
    <property type="match status" value="1"/>
</dbReference>
<dbReference type="Gene3D" id="3.30.420.100">
    <property type="match status" value="1"/>
</dbReference>
<dbReference type="HAMAP" id="MF_01337_A">
    <property type="entry name" value="Ribosomal_uL18_A"/>
    <property type="match status" value="1"/>
</dbReference>
<dbReference type="InterPro" id="IPR005485">
    <property type="entry name" value="Rbsml_uL18_euk"/>
</dbReference>
<dbReference type="InterPro" id="IPR025607">
    <property type="entry name" value="Ribosomal_uL18_C_euk"/>
</dbReference>
<dbReference type="PANTHER" id="PTHR23410:SF35">
    <property type="entry name" value="LARGE RIBOSOMAL SUBUNIT PROTEIN UL18Y-RELATED"/>
    <property type="match status" value="1"/>
</dbReference>
<dbReference type="PANTHER" id="PTHR23410">
    <property type="entry name" value="RIBOSOMAL PROTEIN L5-RELATED"/>
    <property type="match status" value="1"/>
</dbReference>
<dbReference type="Pfam" id="PF14204">
    <property type="entry name" value="Ribosomal_L18_c"/>
    <property type="match status" value="1"/>
</dbReference>
<dbReference type="Pfam" id="PF17144">
    <property type="entry name" value="Ribosomal_L5e"/>
    <property type="match status" value="1"/>
</dbReference>
<dbReference type="PRINTS" id="PR00058">
    <property type="entry name" value="RIBOSOMALL5"/>
</dbReference>
<dbReference type="SUPFAM" id="SSF53137">
    <property type="entry name" value="Translational machinery components"/>
    <property type="match status" value="1"/>
</dbReference>
<organism>
    <name type="scientific">Arabidopsis thaliana</name>
    <name type="common">Mouse-ear cress</name>
    <dbReference type="NCBI Taxonomy" id="3702"/>
    <lineage>
        <taxon>Eukaryota</taxon>
        <taxon>Viridiplantae</taxon>
        <taxon>Streptophyta</taxon>
        <taxon>Embryophyta</taxon>
        <taxon>Tracheophyta</taxon>
        <taxon>Spermatophyta</taxon>
        <taxon>Magnoliopsida</taxon>
        <taxon>eudicotyledons</taxon>
        <taxon>Gunneridae</taxon>
        <taxon>Pentapetalae</taxon>
        <taxon>rosids</taxon>
        <taxon>malvids</taxon>
        <taxon>Brassicales</taxon>
        <taxon>Brassicaceae</taxon>
        <taxon>Camelineae</taxon>
        <taxon>Arabidopsis</taxon>
    </lineage>
</organism>
<proteinExistence type="evidence at transcript level"/>
<reference key="1">
    <citation type="journal article" date="1998" name="DNA Res.">
        <title>Structural analysis of Arabidopsis thaliana chromosome 5. VII. Sequence features of the regions of 1,013,767 bp covered by sixteen physically assigned P1 and TAC clones.</title>
        <authorList>
            <person name="Nakamura Y."/>
            <person name="Sato S."/>
            <person name="Asamizu E."/>
            <person name="Kaneko T."/>
            <person name="Kotani H."/>
            <person name="Miyajima N."/>
            <person name="Tabata S."/>
        </authorList>
    </citation>
    <scope>NUCLEOTIDE SEQUENCE [LARGE SCALE GENOMIC DNA]</scope>
    <source>
        <strain>cv. Columbia</strain>
    </source>
</reference>
<reference key="2">
    <citation type="journal article" date="2017" name="Plant J.">
        <title>Araport11: a complete reannotation of the Arabidopsis thaliana reference genome.</title>
        <authorList>
            <person name="Cheng C.Y."/>
            <person name="Krishnakumar V."/>
            <person name="Chan A.P."/>
            <person name="Thibaud-Nissen F."/>
            <person name="Schobel S."/>
            <person name="Town C.D."/>
        </authorList>
    </citation>
    <scope>GENOME REANNOTATION</scope>
    <source>
        <strain>cv. Columbia</strain>
    </source>
</reference>
<reference key="3">
    <citation type="journal article" date="2003" name="Science">
        <title>Empirical analysis of transcriptional activity in the Arabidopsis genome.</title>
        <authorList>
            <person name="Yamada K."/>
            <person name="Lim J."/>
            <person name="Dale J.M."/>
            <person name="Chen H."/>
            <person name="Shinn P."/>
            <person name="Palm C.J."/>
            <person name="Southwick A.M."/>
            <person name="Wu H.C."/>
            <person name="Kim C.J."/>
            <person name="Nguyen M."/>
            <person name="Pham P.K."/>
            <person name="Cheuk R.F."/>
            <person name="Karlin-Newmann G."/>
            <person name="Liu S.X."/>
            <person name="Lam B."/>
            <person name="Sakano H."/>
            <person name="Wu T."/>
            <person name="Yu G."/>
            <person name="Miranda M."/>
            <person name="Quach H.L."/>
            <person name="Tripp M."/>
            <person name="Chang C.H."/>
            <person name="Lee J.M."/>
            <person name="Toriumi M.J."/>
            <person name="Chan M.M."/>
            <person name="Tang C.C."/>
            <person name="Onodera C.S."/>
            <person name="Deng J.M."/>
            <person name="Akiyama K."/>
            <person name="Ansari Y."/>
            <person name="Arakawa T."/>
            <person name="Banh J."/>
            <person name="Banno F."/>
            <person name="Bowser L."/>
            <person name="Brooks S.Y."/>
            <person name="Carninci P."/>
            <person name="Chao Q."/>
            <person name="Choy N."/>
            <person name="Enju A."/>
            <person name="Goldsmith A.D."/>
            <person name="Gurjal M."/>
            <person name="Hansen N.F."/>
            <person name="Hayashizaki Y."/>
            <person name="Johnson-Hopson C."/>
            <person name="Hsuan V.W."/>
            <person name="Iida K."/>
            <person name="Karnes M."/>
            <person name="Khan S."/>
            <person name="Koesema E."/>
            <person name="Ishida J."/>
            <person name="Jiang P.X."/>
            <person name="Jones T."/>
            <person name="Kawai J."/>
            <person name="Kamiya A."/>
            <person name="Meyers C."/>
            <person name="Nakajima M."/>
            <person name="Narusaka M."/>
            <person name="Seki M."/>
            <person name="Sakurai T."/>
            <person name="Satou M."/>
            <person name="Tamse R."/>
            <person name="Vaysberg M."/>
            <person name="Wallender E.K."/>
            <person name="Wong C."/>
            <person name="Yamamura Y."/>
            <person name="Yuan S."/>
            <person name="Shinozaki K."/>
            <person name="Davis R.W."/>
            <person name="Theologis A."/>
            <person name="Ecker J.R."/>
        </authorList>
    </citation>
    <scope>NUCLEOTIDE SEQUENCE [LARGE SCALE MRNA]</scope>
    <source>
        <strain>cv. Columbia</strain>
    </source>
</reference>
<reference key="4">
    <citation type="journal article" date="1993" name="Plant J.">
        <title>An inventory of 1152 expressed sequence tags obtained by partial sequencing of cDNAs from Arabidopsis thaliana.</title>
        <authorList>
            <person name="Hoefte H."/>
            <person name="Desprez T."/>
            <person name="Amselem J."/>
            <person name="Chiapello H."/>
            <person name="Rouze P."/>
            <person name="Caboche M."/>
            <person name="Moisan A."/>
            <person name="Jourjon M.-F."/>
            <person name="Charpenteau J.-L."/>
            <person name="Berthomieu P."/>
            <person name="Guerrier D."/>
            <person name="Giraudat J."/>
            <person name="Quigley F."/>
            <person name="Thomas F."/>
            <person name="Yu D.-Y."/>
            <person name="Mache R."/>
            <person name="Raynal M."/>
            <person name="Cooke R."/>
            <person name="Grellet F."/>
            <person name="Delseny M."/>
            <person name="Parmentier Y."/>
            <person name="de Marcillac G."/>
            <person name="Gigot C."/>
            <person name="Fleck J."/>
            <person name="Philipps G."/>
            <person name="Axelos M."/>
            <person name="Bardet C."/>
            <person name="Tremousaygue D."/>
            <person name="Lescure B."/>
        </authorList>
    </citation>
    <scope>NUCLEOTIDE SEQUENCE [LARGE SCALE MRNA] OF 3-60 AND 217-301</scope>
    <source>
        <strain>cv. Columbia</strain>
        <tissue>Green siliques</tissue>
    </source>
</reference>
<reference key="5">
    <citation type="journal article" date="2001" name="Plant Physiol.">
        <title>The organization of cytoplasmic ribosomal protein genes in the Arabidopsis genome.</title>
        <authorList>
            <person name="Barakat A."/>
            <person name="Szick-Miranda K."/>
            <person name="Chang I.-F."/>
            <person name="Guyot R."/>
            <person name="Blanc G."/>
            <person name="Cooke R."/>
            <person name="Delseny M."/>
            <person name="Bailey-Serres J."/>
        </authorList>
    </citation>
    <scope>GENE FAMILY ORGANIZATION</scope>
    <scope>NOMENCLATURE</scope>
</reference>
<reference key="6">
    <citation type="journal article" date="2008" name="Development">
        <title>Ribosomal proteins promote leaf adaxial identity.</title>
        <authorList>
            <person name="Yao Y."/>
            <person name="Ling Q."/>
            <person name="Wang H."/>
            <person name="Huang H."/>
        </authorList>
    </citation>
    <scope>FUNCTION</scope>
    <scope>DISRUPTION PHENOTYPE</scope>
    <source>
        <strain>cv. Columbia</strain>
    </source>
</reference>
<reference key="7">
    <citation type="journal article" date="2009" name="Plant J.">
        <title>Coordination of cell proliferation and cell expansion mediated by ribosome-related processes in the leaves of Arabidopsis thaliana.</title>
        <authorList>
            <person name="Fujikura U."/>
            <person name="Horiguchi G."/>
            <person name="Ponce M.R."/>
            <person name="Micol J.L."/>
            <person name="Tsukaya H."/>
        </authorList>
    </citation>
    <scope>FUNCTION</scope>
    <scope>DISRUPTION PHENOTYPE</scope>
</reference>
<reference key="8">
    <citation type="journal article" date="2023" name="Plant Cell">
        <title>An updated nomenclature for plant ribosomal protein genes.</title>
        <authorList>
            <person name="Scarpin M.R."/>
            <person name="Busche M."/>
            <person name="Martinez R.E."/>
            <person name="Harper L.C."/>
            <person name="Reiser L."/>
            <person name="Szakonyi D."/>
            <person name="Merchante C."/>
            <person name="Lan T."/>
            <person name="Xiong W."/>
            <person name="Mo B."/>
            <person name="Tang G."/>
            <person name="Chen X."/>
            <person name="Bailey-Serres J."/>
            <person name="Browning K.S."/>
            <person name="Brunkard J.O."/>
        </authorList>
    </citation>
    <scope>NOMENCLATURE</scope>
</reference>
<feature type="chain" id="PRO_0000131444" description="Large ribosomal subunit protein uL18y">
    <location>
        <begin position="1"/>
        <end position="301"/>
    </location>
</feature>
<feature type="region of interest" description="Disordered" evidence="3">
    <location>
        <begin position="247"/>
        <end position="267"/>
    </location>
</feature>
<feature type="compositionally biased region" description="Basic and acidic residues" evidence="3">
    <location>
        <begin position="249"/>
        <end position="261"/>
    </location>
</feature>
<feature type="sequence conflict" description="In Ref. 4; CAA79041." evidence="9" ref="4">
    <original>K</original>
    <variation>E</variation>
    <location>
        <position position="228"/>
    </location>
</feature>
<sequence length="301" mass="34437">MVFVKSSKSNAYFKRYQVKFRRRRDGKTDYRARIRLINQDKNKYNTPKYRFVVRFTNKDIVAQIVSASIAGDIVKASAYAHELPQYGLTVGLTNYAAAYCTGLLLARRVLKMLEMDDEYEGNVEATGEDFSVEPTDSRRPFRALLDVGLIRTTTGNRVFGALKGALDGGLDIPHSDKRFAGFHKENKQLDAEIHRNYIYGGHVSNYMKLLGEDEPEKLQTHFSAYIKKGVEAESIEEMYKKVHAAIRAEPNHKKTEKSAPKEHKRYNLKKLTYEERKNKLIERVKALNGAGGDDDDEDDEE</sequence>